<evidence type="ECO:0000250" key="1">
    <source>
        <dbReference type="UniProtKB" id="Q8VZW3"/>
    </source>
</evidence>
<evidence type="ECO:0000269" key="2">
    <source>
    </source>
</evidence>
<evidence type="ECO:0000303" key="3">
    <source>
    </source>
</evidence>
<evidence type="ECO:0000303" key="4">
    <source>
    </source>
</evidence>
<evidence type="ECO:0000305" key="5"/>
<evidence type="ECO:0000305" key="6">
    <source>
    </source>
</evidence>
<evidence type="ECO:0000305" key="7">
    <source>
    </source>
</evidence>
<name>CHIL1_HUMLU</name>
<dbReference type="EC" id="5.5.1.6" evidence="1"/>
<dbReference type="EMBL" id="MG324004">
    <property type="protein sequence ID" value="AVR53896.1"/>
    <property type="molecule type" value="mRNA"/>
</dbReference>
<dbReference type="SMR" id="A0A2U7XUH7"/>
<dbReference type="SABIO-RK" id="A0A2U7XUH7"/>
<dbReference type="UniPathway" id="UPA00154"/>
<dbReference type="GO" id="GO:0009570">
    <property type="term" value="C:chloroplast stroma"/>
    <property type="evidence" value="ECO:0007669"/>
    <property type="project" value="TreeGrafter"/>
</dbReference>
<dbReference type="GO" id="GO:0005737">
    <property type="term" value="C:cytoplasm"/>
    <property type="evidence" value="ECO:0000314"/>
    <property type="project" value="UniProtKB"/>
</dbReference>
<dbReference type="GO" id="GO:0045430">
    <property type="term" value="F:chalcone isomerase activity"/>
    <property type="evidence" value="ECO:0007669"/>
    <property type="project" value="UniProtKB-EC"/>
</dbReference>
<dbReference type="GO" id="GO:0005504">
    <property type="term" value="F:fatty acid binding"/>
    <property type="evidence" value="ECO:0007669"/>
    <property type="project" value="TreeGrafter"/>
</dbReference>
<dbReference type="GO" id="GO:0006631">
    <property type="term" value="P:fatty acid metabolic process"/>
    <property type="evidence" value="ECO:0007669"/>
    <property type="project" value="TreeGrafter"/>
</dbReference>
<dbReference type="GO" id="GO:0009813">
    <property type="term" value="P:flavonoid biosynthetic process"/>
    <property type="evidence" value="ECO:0007669"/>
    <property type="project" value="UniProtKB-UniPathway"/>
</dbReference>
<dbReference type="Gene3D" id="1.10.890.20">
    <property type="match status" value="1"/>
</dbReference>
<dbReference type="Gene3D" id="3.50.70.10">
    <property type="match status" value="1"/>
</dbReference>
<dbReference type="InterPro" id="IPR016088">
    <property type="entry name" value="Chalcone_isomerase_3-sand"/>
</dbReference>
<dbReference type="InterPro" id="IPR016089">
    <property type="entry name" value="Chalcone_isomerase_bundle_sf"/>
</dbReference>
<dbReference type="InterPro" id="IPR036298">
    <property type="entry name" value="Chalcone_isomerase_sf"/>
</dbReference>
<dbReference type="InterPro" id="IPR044228">
    <property type="entry name" value="FAP1"/>
</dbReference>
<dbReference type="PANTHER" id="PTHR47589">
    <property type="entry name" value="FATTY-ACID-BINDING PROTEIN 1"/>
    <property type="match status" value="1"/>
</dbReference>
<dbReference type="PANTHER" id="PTHR47589:SF4">
    <property type="entry name" value="FATTY-ACID-BINDING PROTEIN 1-LIKE"/>
    <property type="match status" value="1"/>
</dbReference>
<dbReference type="SUPFAM" id="SSF54626">
    <property type="entry name" value="Chalcone isomerase"/>
    <property type="match status" value="1"/>
</dbReference>
<organism>
    <name type="scientific">Humulus lupulus</name>
    <name type="common">European hop</name>
    <dbReference type="NCBI Taxonomy" id="3486"/>
    <lineage>
        <taxon>Eukaryota</taxon>
        <taxon>Viridiplantae</taxon>
        <taxon>Streptophyta</taxon>
        <taxon>Embryophyta</taxon>
        <taxon>Tracheophyta</taxon>
        <taxon>Spermatophyta</taxon>
        <taxon>Magnoliopsida</taxon>
        <taxon>eudicotyledons</taxon>
        <taxon>Gunneridae</taxon>
        <taxon>Pentapetalae</taxon>
        <taxon>rosids</taxon>
        <taxon>fabids</taxon>
        <taxon>Rosales</taxon>
        <taxon>Cannabaceae</taxon>
        <taxon>Humulus</taxon>
    </lineage>
</organism>
<comment type="function">
    <text evidence="1 2 7">Involved in the biosynthesis of prenylated phenolics natural products which contribute to the bitter taste of beer and display broad biological activities (Probable). Involved in anthocyanin biosynthesis (By similarity). Polyketide binding proteins (PBP) which reduces the catalytic activities of CHS_H1 and PT1L and prevents demethylxanthohumol (DMX) production, by binding to DMX and naringenin chalcone (NC) to stabilize the chalconoids ring-opened structure (PubMed:29760092).</text>
</comment>
<comment type="catalytic activity">
    <reaction evidence="1">
        <text>a chalcone = a flavanone.</text>
        <dbReference type="EC" id="5.5.1.6"/>
    </reaction>
</comment>
<comment type="pathway">
    <text evidence="2">Secondary metabolite biosynthesis; flavonoid biosynthesis.</text>
</comment>
<comment type="subcellular location">
    <subcellularLocation>
        <location evidence="2">Cytoplasm</location>
    </subcellularLocation>
</comment>
<comment type="tissue specificity">
    <text evidence="2">Mostly expressed in glandular trichomes (lupulin glands), and, to a lower extent, in cones, cones bracts, leaves, stems and roots.</text>
</comment>
<comment type="similarity">
    <text evidence="5">Belongs to the chalcone isomerase family.</text>
</comment>
<gene>
    <name evidence="3" type="primary">CHIL1</name>
    <name evidence="4" type="synonym">HICHIL1</name>
</gene>
<feature type="chain" id="PRO_0000452944" description="Chalcone isomerase-like protein 1">
    <location>
        <begin position="1"/>
        <end position="214"/>
    </location>
</feature>
<feature type="site" description="Involved in polyketide binding" evidence="6">
    <location>
        <position position="139"/>
    </location>
</feature>
<feature type="site" description="Involved in polyketide binding" evidence="6">
    <location>
        <position position="143"/>
    </location>
</feature>
<feature type="mutagenesis site" description="Higher affinity for demethylxanthohumol (DMX) and naringenin chalcone (NC). Reduced stabilization by DMX and NC; when associated with F-143." evidence="2">
    <original>V</original>
    <variation>F</variation>
    <location>
        <position position="139"/>
    </location>
</feature>
<feature type="mutagenesis site" description="Reduced stabilization by demethylxanthohumol (DMX) and naringenin chalcone (NC); when associated with F-139." evidence="2">
    <original>A</original>
    <variation>F</variation>
    <location>
        <position position="143"/>
    </location>
</feature>
<proteinExistence type="evidence at protein level"/>
<sequence length="214" mass="23377">MATALNSKNASSNTAVHIEPKTGIAFPVKLDDGKSLNSVGLRKKSLLGMGIKVFGFGLYADNEKLKNLLKLKIGKSPAKPTEEMYQLVIDGDIGLTHKIVIAYSGLKMNMFKKAFSEALGESIMKLNGGRKNEELANKVLGPASDQIKLATGSEMEISKLPGYVLETKVHGELASRVESELLCRAYFGIYLGEITMECYKESKEMFGQSMLSLF</sequence>
<keyword id="KW-0963">Cytoplasm</keyword>
<keyword id="KW-0284">Flavonoid biosynthesis</keyword>
<keyword id="KW-0413">Isomerase</keyword>
<reference key="1">
    <citation type="journal article" date="2018" name="Proc. Natl. Acad. Sci. U.S.A.">
        <title>Noncatalytic chalcone isomerase-fold proteins in Humulus lupulus are auxiliary components in prenylated flavonoid biosynthesis.</title>
        <authorList>
            <person name="Ban Z."/>
            <person name="Qin H."/>
            <person name="Mitchell A.J."/>
            <person name="Liu B."/>
            <person name="Zhang F."/>
            <person name="Weng J.-K."/>
            <person name="Dixon R.A."/>
            <person name="Wang G."/>
        </authorList>
    </citation>
    <scope>NUCLEOTIDE SEQUENCE [MRNA]</scope>
    <scope>FUNCTION</scope>
    <scope>MUTAGENESIS OF VAL-139 AND ALA-143</scope>
    <scope>PATHWAY</scope>
    <scope>TISSUE SPECIFICITY</scope>
    <scope>SUBCELLULAR LOCATION</scope>
</reference>
<reference key="2">
    <citation type="journal article" date="2019" name="Nat. Prod. Rep.">
        <title>Non-volatile natural products in plant glandular trichomes: chemistry, biological activities and biosynthesis.</title>
        <authorList>
            <person name="Liu Y."/>
            <person name="Jing S.-X."/>
            <person name="Luo S.-H."/>
            <person name="Li S.-H."/>
        </authorList>
    </citation>
    <scope>REVIEW</scope>
</reference>
<accession>A0A2U7XUH7</accession>
<protein>
    <recommendedName>
        <fullName evidence="3">Chalcone isomerase-like protein 1</fullName>
        <shortName evidence="3">HlCHIL1</shortName>
        <ecNumber evidence="1">5.5.1.6</ecNumber>
    </recommendedName>
</protein>